<reference key="1">
    <citation type="journal article" date="2005" name="Nature">
        <title>The genome of the social amoeba Dictyostelium discoideum.</title>
        <authorList>
            <person name="Eichinger L."/>
            <person name="Pachebat J.A."/>
            <person name="Gloeckner G."/>
            <person name="Rajandream M.A."/>
            <person name="Sucgang R."/>
            <person name="Berriman M."/>
            <person name="Song J."/>
            <person name="Olsen R."/>
            <person name="Szafranski K."/>
            <person name="Xu Q."/>
            <person name="Tunggal B."/>
            <person name="Kummerfeld S."/>
            <person name="Madera M."/>
            <person name="Konfortov B.A."/>
            <person name="Rivero F."/>
            <person name="Bankier A.T."/>
            <person name="Lehmann R."/>
            <person name="Hamlin N."/>
            <person name="Davies R."/>
            <person name="Gaudet P."/>
            <person name="Fey P."/>
            <person name="Pilcher K."/>
            <person name="Chen G."/>
            <person name="Saunders D."/>
            <person name="Sodergren E.J."/>
            <person name="Davis P."/>
            <person name="Kerhornou A."/>
            <person name="Nie X."/>
            <person name="Hall N."/>
            <person name="Anjard C."/>
            <person name="Hemphill L."/>
            <person name="Bason N."/>
            <person name="Farbrother P."/>
            <person name="Desany B."/>
            <person name="Just E."/>
            <person name="Morio T."/>
            <person name="Rost R."/>
            <person name="Churcher C.M."/>
            <person name="Cooper J."/>
            <person name="Haydock S."/>
            <person name="van Driessche N."/>
            <person name="Cronin A."/>
            <person name="Goodhead I."/>
            <person name="Muzny D.M."/>
            <person name="Mourier T."/>
            <person name="Pain A."/>
            <person name="Lu M."/>
            <person name="Harper D."/>
            <person name="Lindsay R."/>
            <person name="Hauser H."/>
            <person name="James K.D."/>
            <person name="Quiles M."/>
            <person name="Madan Babu M."/>
            <person name="Saito T."/>
            <person name="Buchrieser C."/>
            <person name="Wardroper A."/>
            <person name="Felder M."/>
            <person name="Thangavelu M."/>
            <person name="Johnson D."/>
            <person name="Knights A."/>
            <person name="Loulseged H."/>
            <person name="Mungall K.L."/>
            <person name="Oliver K."/>
            <person name="Price C."/>
            <person name="Quail M.A."/>
            <person name="Urushihara H."/>
            <person name="Hernandez J."/>
            <person name="Rabbinowitsch E."/>
            <person name="Steffen D."/>
            <person name="Sanders M."/>
            <person name="Ma J."/>
            <person name="Kohara Y."/>
            <person name="Sharp S."/>
            <person name="Simmonds M.N."/>
            <person name="Spiegler S."/>
            <person name="Tivey A."/>
            <person name="Sugano S."/>
            <person name="White B."/>
            <person name="Walker D."/>
            <person name="Woodward J.R."/>
            <person name="Winckler T."/>
            <person name="Tanaka Y."/>
            <person name="Shaulsky G."/>
            <person name="Schleicher M."/>
            <person name="Weinstock G.M."/>
            <person name="Rosenthal A."/>
            <person name="Cox E.C."/>
            <person name="Chisholm R.L."/>
            <person name="Gibbs R.A."/>
            <person name="Loomis W.F."/>
            <person name="Platzer M."/>
            <person name="Kay R.R."/>
            <person name="Williams J.G."/>
            <person name="Dear P.H."/>
            <person name="Noegel A.A."/>
            <person name="Barrell B.G."/>
            <person name="Kuspa A."/>
        </authorList>
    </citation>
    <scope>NUCLEOTIDE SEQUENCE [LARGE SCALE GENOMIC DNA]</scope>
    <source>
        <strain>AX4</strain>
    </source>
</reference>
<feature type="chain" id="PRO_0000312520" description="Rho-related protein racN">
    <location>
        <begin position="1"/>
        <end position="216"/>
    </location>
</feature>
<feature type="propeptide" id="PRO_0000312523" description="Removed in mature form" evidence="1">
    <location>
        <begin position="217"/>
        <end position="219"/>
    </location>
</feature>
<feature type="short sequence motif" description="Effector region" evidence="2">
    <location>
        <begin position="33"/>
        <end position="41"/>
    </location>
</feature>
<feature type="binding site" evidence="1">
    <location>
        <begin position="12"/>
        <end position="19"/>
    </location>
    <ligand>
        <name>GTP</name>
        <dbReference type="ChEBI" id="CHEBI:37565"/>
    </ligand>
</feature>
<feature type="binding site" evidence="1">
    <location>
        <begin position="58"/>
        <end position="62"/>
    </location>
    <ligand>
        <name>GTP</name>
        <dbReference type="ChEBI" id="CHEBI:37565"/>
    </ligand>
</feature>
<feature type="binding site" evidence="1">
    <location>
        <begin position="114"/>
        <end position="117"/>
    </location>
    <ligand>
        <name>GTP</name>
        <dbReference type="ChEBI" id="CHEBI:37565"/>
    </ligand>
</feature>
<feature type="modified residue" description="Cysteine methyl ester" evidence="1">
    <location>
        <position position="216"/>
    </location>
</feature>
<feature type="lipid moiety-binding region" description="S-geranylgeranyl cysteine" evidence="1">
    <location>
        <position position="216"/>
    </location>
</feature>
<evidence type="ECO:0000250" key="1"/>
<evidence type="ECO:0000255" key="2"/>
<evidence type="ECO:0000305" key="3"/>
<protein>
    <recommendedName>
        <fullName>Rho-related protein racN</fullName>
    </recommendedName>
</protein>
<sequence>MKEKIIKAVVLGDVTIGKTSLLVTKKIGFPLEYIPTIFDNHYFEIKINDQIMRIGCWDTGGGEEYPRPLSYPQTNLFLILFSISSRNSFNNCETYWLPEVTKFLPSVPIILVGTKTDLRNCDDYKDKSTFVTYEEGLEMKDKINASAYLECSSLLNKGVDDLFDTMAIIGNNDLKSIIPNQLLRDHYNQSQRSEIYEAQRNNYENNNNNNNNNNKCIIC</sequence>
<organism>
    <name type="scientific">Dictyostelium discoideum</name>
    <name type="common">Social amoeba</name>
    <dbReference type="NCBI Taxonomy" id="44689"/>
    <lineage>
        <taxon>Eukaryota</taxon>
        <taxon>Amoebozoa</taxon>
        <taxon>Evosea</taxon>
        <taxon>Eumycetozoa</taxon>
        <taxon>Dictyostelia</taxon>
        <taxon>Dictyosteliales</taxon>
        <taxon>Dictyosteliaceae</taxon>
        <taxon>Dictyostelium</taxon>
    </lineage>
</organism>
<dbReference type="EMBL" id="AAFI02000023">
    <property type="protein sequence ID" value="EAL68177.1"/>
    <property type="molecule type" value="Genomic_DNA"/>
</dbReference>
<dbReference type="RefSeq" id="XP_642068.1">
    <property type="nucleotide sequence ID" value="XM_636976.1"/>
</dbReference>
<dbReference type="SMR" id="Q54YY4"/>
<dbReference type="FunCoup" id="Q54YY4">
    <property type="interactions" value="62"/>
</dbReference>
<dbReference type="STRING" id="44689.Q54YY4"/>
<dbReference type="PaxDb" id="44689-DDB0230036"/>
<dbReference type="EnsemblProtists" id="EAL68177">
    <property type="protein sequence ID" value="EAL68177"/>
    <property type="gene ID" value="DDB_G0278009"/>
</dbReference>
<dbReference type="GeneID" id="8621280"/>
<dbReference type="KEGG" id="ddi:DDB_G0278009"/>
<dbReference type="dictyBase" id="DDB_G0278009">
    <property type="gene designation" value="racN"/>
</dbReference>
<dbReference type="VEuPathDB" id="AmoebaDB:DDB_G0278009"/>
<dbReference type="eggNOG" id="KOG0393">
    <property type="taxonomic scope" value="Eukaryota"/>
</dbReference>
<dbReference type="HOGENOM" id="CLU_041217_21_3_1"/>
<dbReference type="InParanoid" id="Q54YY4"/>
<dbReference type="OMA" id="KINASAY"/>
<dbReference type="PhylomeDB" id="Q54YY4"/>
<dbReference type="Reactome" id="R-DDI-6798695">
    <property type="pathway name" value="Neutrophil degranulation"/>
</dbReference>
<dbReference type="Reactome" id="R-DDI-9013404">
    <property type="pathway name" value="RAC2 GTPase cycle"/>
</dbReference>
<dbReference type="Reactome" id="R-DDI-9013407">
    <property type="pathway name" value="RHOH GTPase cycle"/>
</dbReference>
<dbReference type="Reactome" id="R-DDI-9013408">
    <property type="pathway name" value="RHOG GTPase cycle"/>
</dbReference>
<dbReference type="Reactome" id="R-DDI-9013418">
    <property type="pathway name" value="RHOBTB2 GTPase cycle"/>
</dbReference>
<dbReference type="Reactome" id="R-DDI-9013422">
    <property type="pathway name" value="RHOBTB1 GTPase cycle"/>
</dbReference>
<dbReference type="PRO" id="PR:Q54YY4"/>
<dbReference type="Proteomes" id="UP000002195">
    <property type="component" value="Chromosome 3"/>
</dbReference>
<dbReference type="GO" id="GO:0042995">
    <property type="term" value="C:cell projection"/>
    <property type="evidence" value="ECO:0000318"/>
    <property type="project" value="GO_Central"/>
</dbReference>
<dbReference type="GO" id="GO:0031410">
    <property type="term" value="C:cytoplasmic vesicle"/>
    <property type="evidence" value="ECO:0000318"/>
    <property type="project" value="GO_Central"/>
</dbReference>
<dbReference type="GO" id="GO:0005856">
    <property type="term" value="C:cytoskeleton"/>
    <property type="evidence" value="ECO:0000318"/>
    <property type="project" value="GO_Central"/>
</dbReference>
<dbReference type="GO" id="GO:0005886">
    <property type="term" value="C:plasma membrane"/>
    <property type="evidence" value="ECO:0000318"/>
    <property type="project" value="GO_Central"/>
</dbReference>
<dbReference type="GO" id="GO:0005525">
    <property type="term" value="F:GTP binding"/>
    <property type="evidence" value="ECO:0000318"/>
    <property type="project" value="GO_Central"/>
</dbReference>
<dbReference type="GO" id="GO:0003924">
    <property type="term" value="F:GTPase activity"/>
    <property type="evidence" value="ECO:0000318"/>
    <property type="project" value="GO_Central"/>
</dbReference>
<dbReference type="GO" id="GO:0019901">
    <property type="term" value="F:protein kinase binding"/>
    <property type="evidence" value="ECO:0000318"/>
    <property type="project" value="GO_Central"/>
</dbReference>
<dbReference type="GO" id="GO:0007015">
    <property type="term" value="P:actin filament organization"/>
    <property type="evidence" value="ECO:0000318"/>
    <property type="project" value="GO_Central"/>
</dbReference>
<dbReference type="GO" id="GO:0030865">
    <property type="term" value="P:cortical cytoskeleton organization"/>
    <property type="evidence" value="ECO:0000318"/>
    <property type="project" value="GO_Central"/>
</dbReference>
<dbReference type="GO" id="GO:0007163">
    <property type="term" value="P:establishment or maintenance of cell polarity"/>
    <property type="evidence" value="ECO:0000318"/>
    <property type="project" value="GO_Central"/>
</dbReference>
<dbReference type="GO" id="GO:0000281">
    <property type="term" value="P:mitotic cytokinesis"/>
    <property type="evidence" value="ECO:0000318"/>
    <property type="project" value="GO_Central"/>
</dbReference>
<dbReference type="GO" id="GO:0032956">
    <property type="term" value="P:regulation of actin cytoskeleton organization"/>
    <property type="evidence" value="ECO:0000318"/>
    <property type="project" value="GO_Central"/>
</dbReference>
<dbReference type="GO" id="GO:0008360">
    <property type="term" value="P:regulation of cell shape"/>
    <property type="evidence" value="ECO:0000318"/>
    <property type="project" value="GO_Central"/>
</dbReference>
<dbReference type="GO" id="GO:0007165">
    <property type="term" value="P:signal transduction"/>
    <property type="evidence" value="ECO:0000318"/>
    <property type="project" value="GO_Central"/>
</dbReference>
<dbReference type="GO" id="GO:0007264">
    <property type="term" value="P:small GTPase-mediated signal transduction"/>
    <property type="evidence" value="ECO:0007669"/>
    <property type="project" value="InterPro"/>
</dbReference>
<dbReference type="CDD" id="cd00157">
    <property type="entry name" value="Rho"/>
    <property type="match status" value="1"/>
</dbReference>
<dbReference type="FunFam" id="3.40.50.300:FF:001799">
    <property type="entry name" value="Rac2 family GTP-binding protein, putative"/>
    <property type="match status" value="1"/>
</dbReference>
<dbReference type="Gene3D" id="3.40.50.300">
    <property type="entry name" value="P-loop containing nucleotide triphosphate hydrolases"/>
    <property type="match status" value="1"/>
</dbReference>
<dbReference type="InterPro" id="IPR027417">
    <property type="entry name" value="P-loop_NTPase"/>
</dbReference>
<dbReference type="InterPro" id="IPR005225">
    <property type="entry name" value="Small_GTP-bd"/>
</dbReference>
<dbReference type="InterPro" id="IPR001806">
    <property type="entry name" value="Small_GTPase"/>
</dbReference>
<dbReference type="InterPro" id="IPR003578">
    <property type="entry name" value="Small_GTPase_Rho"/>
</dbReference>
<dbReference type="NCBIfam" id="TIGR00231">
    <property type="entry name" value="small_GTP"/>
    <property type="match status" value="1"/>
</dbReference>
<dbReference type="PANTHER" id="PTHR24072">
    <property type="entry name" value="RHO FAMILY GTPASE"/>
    <property type="match status" value="1"/>
</dbReference>
<dbReference type="Pfam" id="PF00071">
    <property type="entry name" value="Ras"/>
    <property type="match status" value="1"/>
</dbReference>
<dbReference type="PRINTS" id="PR00449">
    <property type="entry name" value="RASTRNSFRMNG"/>
</dbReference>
<dbReference type="SMART" id="SM00175">
    <property type="entry name" value="RAB"/>
    <property type="match status" value="1"/>
</dbReference>
<dbReference type="SMART" id="SM00173">
    <property type="entry name" value="RAS"/>
    <property type="match status" value="1"/>
</dbReference>
<dbReference type="SMART" id="SM00174">
    <property type="entry name" value="RHO"/>
    <property type="match status" value="1"/>
</dbReference>
<dbReference type="SUPFAM" id="SSF52540">
    <property type="entry name" value="P-loop containing nucleoside triphosphate hydrolases"/>
    <property type="match status" value="1"/>
</dbReference>
<dbReference type="PROSITE" id="PS51420">
    <property type="entry name" value="RHO"/>
    <property type="match status" value="1"/>
</dbReference>
<gene>
    <name type="primary">racN</name>
    <name type="ORF">DDB_G0278009</name>
</gene>
<accession>Q54YY4</accession>
<proteinExistence type="inferred from homology"/>
<keyword id="KW-1003">Cell membrane</keyword>
<keyword id="KW-0342">GTP-binding</keyword>
<keyword id="KW-0449">Lipoprotein</keyword>
<keyword id="KW-0472">Membrane</keyword>
<keyword id="KW-0488">Methylation</keyword>
<keyword id="KW-0547">Nucleotide-binding</keyword>
<keyword id="KW-0636">Prenylation</keyword>
<keyword id="KW-1185">Reference proteome</keyword>
<comment type="subcellular location">
    <subcellularLocation>
        <location evidence="3">Cell membrane</location>
        <topology evidence="3">Lipid-anchor</topology>
        <orientation evidence="3">Cytoplasmic side</orientation>
    </subcellularLocation>
</comment>
<comment type="similarity">
    <text evidence="3">Belongs to the small GTPase superfamily. Rho family.</text>
</comment>
<name>RACN_DICDI</name>